<organism>
    <name type="scientific">Nephroselmis olivacea</name>
    <name type="common">Green alga</name>
    <dbReference type="NCBI Taxonomy" id="31312"/>
    <lineage>
        <taxon>Eukaryota</taxon>
        <taxon>Viridiplantae</taxon>
        <taxon>Chlorophyta</taxon>
        <taxon>Nephroselmidophyceae</taxon>
        <taxon>Nephroselmidales</taxon>
        <taxon>Nephroselmidaceae</taxon>
        <taxon>Nephroselmis</taxon>
    </lineage>
</organism>
<sequence>MLSDQVTTAELHPSAPLTECETGIYHTFCPISCVAWLYQRVEDSFFLVIGTKTCGYFLQNALGVMIFAEPRYAMAELEEGDISAQFNDYHELRRLCVQIQQDRHPSVIVWIGTCTTEIIKMDLEGMAPTLQAEIGIPIVVARANGLDYAFTQGEDTVLAAMAQRCPDWTPDRTATQSTSSPPLVIFGSVPATVVSQLTFELQRQKVEVTGWLPSARYADLPAVGEDVYACGVNPFLSRTAITLMRRRRCKMIGSPFPIGPDGTRAWIEKICHVFGLETTGLAERERQVWSQLEDYLSLVRGKSAFLMGDNLLEISLARFLIRCGMIVHEVGIPYMDARFQAAELHLLMRTCEAAHVPMPRIVTKPDNFYQVQRMRDVQPDLAITGMAHANPLEARGTGTKWSVELTFWQLHGFASAKDLLELVTRPLRRTH</sequence>
<protein>
    <recommendedName>
        <fullName evidence="1">Light-independent protochlorophyllide reductase subunit N</fullName>
        <shortName evidence="1">DPOR subunit N</shortName>
        <shortName evidence="1">LI-POR subunit N</shortName>
        <ecNumber evidence="1">1.3.7.7</ecNumber>
    </recommendedName>
</protein>
<dbReference type="EC" id="1.3.7.7" evidence="1"/>
<dbReference type="EMBL" id="AF137379">
    <property type="protein sequence ID" value="AAD54882.1"/>
    <property type="molecule type" value="Genomic_DNA"/>
</dbReference>
<dbReference type="EMBL" id="AF137379">
    <property type="protein sequence ID" value="AAD54907.1"/>
    <property type="molecule type" value="Genomic_DNA"/>
</dbReference>
<dbReference type="SMR" id="Q9T4F6"/>
<dbReference type="UniPathway" id="UPA00670"/>
<dbReference type="GO" id="GO:0009507">
    <property type="term" value="C:chloroplast"/>
    <property type="evidence" value="ECO:0007669"/>
    <property type="project" value="UniProtKB-SubCell"/>
</dbReference>
<dbReference type="GO" id="GO:0051539">
    <property type="term" value="F:4 iron, 4 sulfur cluster binding"/>
    <property type="evidence" value="ECO:0007669"/>
    <property type="project" value="UniProtKB-UniRule"/>
</dbReference>
<dbReference type="GO" id="GO:0005524">
    <property type="term" value="F:ATP binding"/>
    <property type="evidence" value="ECO:0007669"/>
    <property type="project" value="UniProtKB-UniRule"/>
</dbReference>
<dbReference type="GO" id="GO:0046872">
    <property type="term" value="F:metal ion binding"/>
    <property type="evidence" value="ECO:0007669"/>
    <property type="project" value="UniProtKB-KW"/>
</dbReference>
<dbReference type="GO" id="GO:0016730">
    <property type="term" value="F:oxidoreductase activity, acting on iron-sulfur proteins as donors"/>
    <property type="evidence" value="ECO:0007669"/>
    <property type="project" value="InterPro"/>
</dbReference>
<dbReference type="GO" id="GO:0016636">
    <property type="term" value="F:oxidoreductase activity, acting on the CH-CH group of donors, iron-sulfur protein as acceptor"/>
    <property type="evidence" value="ECO:0007669"/>
    <property type="project" value="UniProtKB-UniRule"/>
</dbReference>
<dbReference type="GO" id="GO:0036068">
    <property type="term" value="P:light-independent chlorophyll biosynthetic process"/>
    <property type="evidence" value="ECO:0007669"/>
    <property type="project" value="UniProtKB-UniRule"/>
</dbReference>
<dbReference type="GO" id="GO:0019685">
    <property type="term" value="P:photosynthesis, dark reaction"/>
    <property type="evidence" value="ECO:0007669"/>
    <property type="project" value="InterPro"/>
</dbReference>
<dbReference type="CDD" id="cd01979">
    <property type="entry name" value="Pchlide_reductase_N"/>
    <property type="match status" value="1"/>
</dbReference>
<dbReference type="Gene3D" id="3.40.50.1980">
    <property type="entry name" value="Nitrogenase molybdenum iron protein domain"/>
    <property type="match status" value="3"/>
</dbReference>
<dbReference type="HAMAP" id="MF_00352">
    <property type="entry name" value="ChlN_BchN"/>
    <property type="match status" value="1"/>
</dbReference>
<dbReference type="InterPro" id="IPR050293">
    <property type="entry name" value="LIPOR_BchN/ChlN"/>
</dbReference>
<dbReference type="InterPro" id="IPR000510">
    <property type="entry name" value="Nase/OxRdtase_comp1"/>
</dbReference>
<dbReference type="InterPro" id="IPR005970">
    <property type="entry name" value="Protochl_reductN"/>
</dbReference>
<dbReference type="NCBIfam" id="TIGR01279">
    <property type="entry name" value="DPOR_bchN"/>
    <property type="match status" value="1"/>
</dbReference>
<dbReference type="NCBIfam" id="NF002768">
    <property type="entry name" value="PRK02842.1"/>
    <property type="match status" value="1"/>
</dbReference>
<dbReference type="PANTHER" id="PTHR39429">
    <property type="entry name" value="LIGHT-INDEPENDENT PROTOCHLOROPHYLLIDE REDUCTASE SUBUNIT N"/>
    <property type="match status" value="1"/>
</dbReference>
<dbReference type="PANTHER" id="PTHR39429:SF3">
    <property type="entry name" value="LIGHT-INDEPENDENT PROTOCHLOROPHYLLIDE REDUCTASE SUBUNIT N"/>
    <property type="match status" value="1"/>
</dbReference>
<dbReference type="Pfam" id="PF00148">
    <property type="entry name" value="Oxidored_nitro"/>
    <property type="match status" value="1"/>
</dbReference>
<dbReference type="PIRSF" id="PIRSF000162">
    <property type="entry name" value="P_chlorophyll_rd"/>
    <property type="match status" value="1"/>
</dbReference>
<dbReference type="SUPFAM" id="SSF53807">
    <property type="entry name" value="Helical backbone' metal receptor"/>
    <property type="match status" value="1"/>
</dbReference>
<geneLocation type="chloroplast"/>
<evidence type="ECO:0000255" key="1">
    <source>
        <dbReference type="HAMAP-Rule" id="MF_00352"/>
    </source>
</evidence>
<name>CHLN_NEPOL</name>
<reference key="1">
    <citation type="journal article" date="1999" name="Proc. Natl. Acad. Sci. U.S.A.">
        <title>The complete chloroplast DNA sequence of the green alga Nephroselmis olivacea: insights into the architecture of ancestral chloroplast genomes.</title>
        <authorList>
            <person name="Turmel M."/>
            <person name="Otis C."/>
            <person name="Lemieux C."/>
        </authorList>
    </citation>
    <scope>NUCLEOTIDE SEQUENCE [LARGE SCALE GENOMIC DNA]</scope>
    <source>
        <strain>NIES-484 / S-N-5-8</strain>
    </source>
</reference>
<feature type="chain" id="PRO_0000208616" description="Light-independent protochlorophyllide reductase subunit N">
    <location>
        <begin position="1"/>
        <end position="431"/>
    </location>
</feature>
<feature type="binding site" evidence="1">
    <location>
        <position position="29"/>
    </location>
    <ligand>
        <name>[4Fe-4S] cluster</name>
        <dbReference type="ChEBI" id="CHEBI:49883"/>
        <note>ligand shared with heterodimeric partner</note>
    </ligand>
</feature>
<feature type="binding site" evidence="1">
    <location>
        <position position="54"/>
    </location>
    <ligand>
        <name>[4Fe-4S] cluster</name>
        <dbReference type="ChEBI" id="CHEBI:49883"/>
        <note>ligand shared with heterodimeric partner</note>
    </ligand>
</feature>
<feature type="binding site" evidence="1">
    <location>
        <position position="114"/>
    </location>
    <ligand>
        <name>[4Fe-4S] cluster</name>
        <dbReference type="ChEBI" id="CHEBI:49883"/>
        <note>ligand shared with heterodimeric partner</note>
    </ligand>
</feature>
<comment type="function">
    <text evidence="1">Component of the dark-operative protochlorophyllide reductase (DPOR) that uses Mg-ATP and reduced ferredoxin to reduce ring D of protochlorophyllide (Pchlide) to form chlorophyllide a (Chlide). This reaction is light-independent. The NB-protein (ChlN-ChlB) is the catalytic component of the complex.</text>
</comment>
<comment type="catalytic activity">
    <reaction evidence="1">
        <text>chlorophyllide a + oxidized 2[4Fe-4S]-[ferredoxin] + 2 ADP + 2 phosphate = protochlorophyllide a + reduced 2[4Fe-4S]-[ferredoxin] + 2 ATP + 2 H2O</text>
        <dbReference type="Rhea" id="RHEA:28202"/>
        <dbReference type="Rhea" id="RHEA-COMP:10002"/>
        <dbReference type="Rhea" id="RHEA-COMP:10004"/>
        <dbReference type="ChEBI" id="CHEBI:15377"/>
        <dbReference type="ChEBI" id="CHEBI:30616"/>
        <dbReference type="ChEBI" id="CHEBI:33722"/>
        <dbReference type="ChEBI" id="CHEBI:33723"/>
        <dbReference type="ChEBI" id="CHEBI:43474"/>
        <dbReference type="ChEBI" id="CHEBI:83348"/>
        <dbReference type="ChEBI" id="CHEBI:83350"/>
        <dbReference type="ChEBI" id="CHEBI:456216"/>
        <dbReference type="EC" id="1.3.7.7"/>
    </reaction>
</comment>
<comment type="cofactor">
    <cofactor evidence="1">
        <name>[4Fe-4S] cluster</name>
        <dbReference type="ChEBI" id="CHEBI:49883"/>
    </cofactor>
    <text evidence="1">Binds 1 [4Fe-4S] cluster per heterodimer. The cluster is bound at the heterodimer interface by residues from both subunits.</text>
</comment>
<comment type="pathway">
    <text evidence="1">Porphyrin-containing compound metabolism; chlorophyll biosynthesis (light-independent).</text>
</comment>
<comment type="subunit">
    <text evidence="1">Protochlorophyllide reductase is composed of three subunits; ChlL, ChlN and ChlB. Forms a heterotetramer of two ChlB and two ChlN subunits.</text>
</comment>
<comment type="subcellular location">
    <subcellularLocation>
        <location>Plastid</location>
        <location>Chloroplast</location>
    </subcellularLocation>
</comment>
<comment type="similarity">
    <text evidence="1">Belongs to the BchN/ChlN family.</text>
</comment>
<gene>
    <name evidence="1" type="primary">chlN-1</name>
</gene>
<gene>
    <name evidence="1" type="primary">chlN-2</name>
</gene>
<accession>Q9T4F6</accession>
<proteinExistence type="inferred from homology"/>
<keyword id="KW-0004">4Fe-4S</keyword>
<keyword id="KW-0067">ATP-binding</keyword>
<keyword id="KW-0149">Chlorophyll biosynthesis</keyword>
<keyword id="KW-0150">Chloroplast</keyword>
<keyword id="KW-0408">Iron</keyword>
<keyword id="KW-0411">Iron-sulfur</keyword>
<keyword id="KW-0479">Metal-binding</keyword>
<keyword id="KW-0547">Nucleotide-binding</keyword>
<keyword id="KW-0560">Oxidoreductase</keyword>
<keyword id="KW-0602">Photosynthesis</keyword>
<keyword id="KW-0934">Plastid</keyword>